<keyword id="KW-0004">4Fe-4S</keyword>
<keyword id="KW-0028">Amino-acid biosynthesis</keyword>
<keyword id="KW-0100">Branched-chain amino acid biosynthesis</keyword>
<keyword id="KW-0408">Iron</keyword>
<keyword id="KW-0411">Iron-sulfur</keyword>
<keyword id="KW-0432">Leucine biosynthesis</keyword>
<keyword id="KW-0456">Lyase</keyword>
<keyword id="KW-0479">Metal-binding</keyword>
<sequence>MAKTLYEKLFDAHVVFEAPNETPLLYIDRHLVHEVTSPQAFDGLRAHHRPVRQPGKTFATMDHNVSTQTKDINASGEMARIQMQELIKNCNEFGVELYDLNHPYQGIVHVMGPEQGVTLPGMTIVCGDSHTATHGAFGALAFGIGTSEVEHVLATQTLKQGRAKTMKIEVTGNAAPGITAKDIVLAIIGKTGSAGGTGHVVEFCGDAIRALSMEGRMTLCNMAIEMGAKAGLVAPDETTFNYVKGRLHAPKGRDFDEAVEYWKTLKTDDGATFDTVVTLRAEEIAPQVTWGTNPGQVISVTDIIPDPASFSDPVERASAEKALAYMGLQPGVPLTDVAIDKVFIGSCTNSRIEDLRAAAEVAKGRKVAPGVQALVVPGSGPVKAQAEAEGLDKIFIEAGFEWRLPGCSMCLAMNNDRLNPGERCASTSNRNFEGRQGRGGRTHLVSPAMAAAAAVTGHFADIRSIK</sequence>
<gene>
    <name evidence="1" type="primary">leuC</name>
    <name type="ordered locus">SeAg_B0127</name>
</gene>
<proteinExistence type="inferred from homology"/>
<name>LEUC_SALA4</name>
<organism>
    <name type="scientific">Salmonella agona (strain SL483)</name>
    <dbReference type="NCBI Taxonomy" id="454166"/>
    <lineage>
        <taxon>Bacteria</taxon>
        <taxon>Pseudomonadati</taxon>
        <taxon>Pseudomonadota</taxon>
        <taxon>Gammaproteobacteria</taxon>
        <taxon>Enterobacterales</taxon>
        <taxon>Enterobacteriaceae</taxon>
        <taxon>Salmonella</taxon>
    </lineage>
</organism>
<feature type="chain" id="PRO_1000135711" description="3-isopropylmalate dehydratase large subunit">
    <location>
        <begin position="1"/>
        <end position="466"/>
    </location>
</feature>
<feature type="binding site" evidence="1">
    <location>
        <position position="347"/>
    </location>
    <ligand>
        <name>[4Fe-4S] cluster</name>
        <dbReference type="ChEBI" id="CHEBI:49883"/>
    </ligand>
</feature>
<feature type="binding site" evidence="1">
    <location>
        <position position="407"/>
    </location>
    <ligand>
        <name>[4Fe-4S] cluster</name>
        <dbReference type="ChEBI" id="CHEBI:49883"/>
    </ligand>
</feature>
<feature type="binding site" evidence="1">
    <location>
        <position position="410"/>
    </location>
    <ligand>
        <name>[4Fe-4S] cluster</name>
        <dbReference type="ChEBI" id="CHEBI:49883"/>
    </ligand>
</feature>
<evidence type="ECO:0000255" key="1">
    <source>
        <dbReference type="HAMAP-Rule" id="MF_01026"/>
    </source>
</evidence>
<dbReference type="EC" id="4.2.1.33" evidence="1"/>
<dbReference type="EMBL" id="CP001138">
    <property type="protein sequence ID" value="ACH48928.1"/>
    <property type="molecule type" value="Genomic_DNA"/>
</dbReference>
<dbReference type="RefSeq" id="WP_001140632.1">
    <property type="nucleotide sequence ID" value="NC_011149.1"/>
</dbReference>
<dbReference type="SMR" id="B5F7U7"/>
<dbReference type="KEGG" id="sea:SeAg_B0127"/>
<dbReference type="HOGENOM" id="CLU_006714_3_4_6"/>
<dbReference type="UniPathway" id="UPA00048">
    <property type="reaction ID" value="UER00071"/>
</dbReference>
<dbReference type="Proteomes" id="UP000008819">
    <property type="component" value="Chromosome"/>
</dbReference>
<dbReference type="GO" id="GO:0003861">
    <property type="term" value="F:3-isopropylmalate dehydratase activity"/>
    <property type="evidence" value="ECO:0007669"/>
    <property type="project" value="UniProtKB-UniRule"/>
</dbReference>
<dbReference type="GO" id="GO:0051539">
    <property type="term" value="F:4 iron, 4 sulfur cluster binding"/>
    <property type="evidence" value="ECO:0007669"/>
    <property type="project" value="UniProtKB-KW"/>
</dbReference>
<dbReference type="GO" id="GO:0046872">
    <property type="term" value="F:metal ion binding"/>
    <property type="evidence" value="ECO:0007669"/>
    <property type="project" value="UniProtKB-KW"/>
</dbReference>
<dbReference type="GO" id="GO:0009098">
    <property type="term" value="P:L-leucine biosynthetic process"/>
    <property type="evidence" value="ECO:0007669"/>
    <property type="project" value="UniProtKB-UniRule"/>
</dbReference>
<dbReference type="CDD" id="cd01583">
    <property type="entry name" value="IPMI"/>
    <property type="match status" value="1"/>
</dbReference>
<dbReference type="FunFam" id="3.30.499.10:FF:000006">
    <property type="entry name" value="3-isopropylmalate dehydratase large subunit"/>
    <property type="match status" value="1"/>
</dbReference>
<dbReference type="FunFam" id="3.30.499.10:FF:000007">
    <property type="entry name" value="3-isopropylmalate dehydratase large subunit"/>
    <property type="match status" value="1"/>
</dbReference>
<dbReference type="Gene3D" id="3.30.499.10">
    <property type="entry name" value="Aconitase, domain 3"/>
    <property type="match status" value="2"/>
</dbReference>
<dbReference type="HAMAP" id="MF_01026">
    <property type="entry name" value="LeuC_type1"/>
    <property type="match status" value="1"/>
</dbReference>
<dbReference type="InterPro" id="IPR004430">
    <property type="entry name" value="3-IsopropMal_deHydase_lsu"/>
</dbReference>
<dbReference type="InterPro" id="IPR015931">
    <property type="entry name" value="Acnase/IPM_dHydase_lsu_aba_1/3"/>
</dbReference>
<dbReference type="InterPro" id="IPR001030">
    <property type="entry name" value="Acoase/IPM_deHydtase_lsu_aba"/>
</dbReference>
<dbReference type="InterPro" id="IPR018136">
    <property type="entry name" value="Aconitase_4Fe-4S_BS"/>
</dbReference>
<dbReference type="InterPro" id="IPR036008">
    <property type="entry name" value="Aconitase_4Fe-4S_dom"/>
</dbReference>
<dbReference type="InterPro" id="IPR050067">
    <property type="entry name" value="IPM_dehydratase_rel_enz"/>
</dbReference>
<dbReference type="InterPro" id="IPR033941">
    <property type="entry name" value="IPMI_cat"/>
</dbReference>
<dbReference type="NCBIfam" id="TIGR00170">
    <property type="entry name" value="leuC"/>
    <property type="match status" value="1"/>
</dbReference>
<dbReference type="NCBIfam" id="NF004016">
    <property type="entry name" value="PRK05478.1"/>
    <property type="match status" value="1"/>
</dbReference>
<dbReference type="NCBIfam" id="NF009116">
    <property type="entry name" value="PRK12466.1"/>
    <property type="match status" value="1"/>
</dbReference>
<dbReference type="PANTHER" id="PTHR43822:SF9">
    <property type="entry name" value="3-ISOPROPYLMALATE DEHYDRATASE"/>
    <property type="match status" value="1"/>
</dbReference>
<dbReference type="PANTHER" id="PTHR43822">
    <property type="entry name" value="HOMOACONITASE, MITOCHONDRIAL-RELATED"/>
    <property type="match status" value="1"/>
</dbReference>
<dbReference type="Pfam" id="PF00330">
    <property type="entry name" value="Aconitase"/>
    <property type="match status" value="1"/>
</dbReference>
<dbReference type="PRINTS" id="PR00415">
    <property type="entry name" value="ACONITASE"/>
</dbReference>
<dbReference type="SUPFAM" id="SSF53732">
    <property type="entry name" value="Aconitase iron-sulfur domain"/>
    <property type="match status" value="1"/>
</dbReference>
<dbReference type="PROSITE" id="PS00450">
    <property type="entry name" value="ACONITASE_1"/>
    <property type="match status" value="1"/>
</dbReference>
<dbReference type="PROSITE" id="PS01244">
    <property type="entry name" value="ACONITASE_2"/>
    <property type="match status" value="1"/>
</dbReference>
<comment type="function">
    <text evidence="1">Catalyzes the isomerization between 2-isopropylmalate and 3-isopropylmalate, via the formation of 2-isopropylmaleate.</text>
</comment>
<comment type="catalytic activity">
    <reaction evidence="1">
        <text>(2R,3S)-3-isopropylmalate = (2S)-2-isopropylmalate</text>
        <dbReference type="Rhea" id="RHEA:32287"/>
        <dbReference type="ChEBI" id="CHEBI:1178"/>
        <dbReference type="ChEBI" id="CHEBI:35121"/>
        <dbReference type="EC" id="4.2.1.33"/>
    </reaction>
</comment>
<comment type="cofactor">
    <cofactor evidence="1">
        <name>[4Fe-4S] cluster</name>
        <dbReference type="ChEBI" id="CHEBI:49883"/>
    </cofactor>
    <text evidence="1">Binds 1 [4Fe-4S] cluster per subunit.</text>
</comment>
<comment type="pathway">
    <text evidence="1">Amino-acid biosynthesis; L-leucine biosynthesis; L-leucine from 3-methyl-2-oxobutanoate: step 2/4.</text>
</comment>
<comment type="subunit">
    <text evidence="1">Heterodimer of LeuC and LeuD.</text>
</comment>
<comment type="similarity">
    <text evidence="1">Belongs to the aconitase/IPM isomerase family. LeuC type 1 subfamily.</text>
</comment>
<protein>
    <recommendedName>
        <fullName evidence="1">3-isopropylmalate dehydratase large subunit</fullName>
        <ecNumber evidence="1">4.2.1.33</ecNumber>
    </recommendedName>
    <alternativeName>
        <fullName evidence="1">Alpha-IPM isomerase</fullName>
        <shortName evidence="1">IPMI</shortName>
    </alternativeName>
    <alternativeName>
        <fullName evidence="1">Isopropylmalate isomerase</fullName>
    </alternativeName>
</protein>
<accession>B5F7U7</accession>
<reference key="1">
    <citation type="journal article" date="2011" name="J. Bacteriol.">
        <title>Comparative genomics of 28 Salmonella enterica isolates: evidence for CRISPR-mediated adaptive sublineage evolution.</title>
        <authorList>
            <person name="Fricke W.F."/>
            <person name="Mammel M.K."/>
            <person name="McDermott P.F."/>
            <person name="Tartera C."/>
            <person name="White D.G."/>
            <person name="Leclerc J.E."/>
            <person name="Ravel J."/>
            <person name="Cebula T.A."/>
        </authorList>
    </citation>
    <scope>NUCLEOTIDE SEQUENCE [LARGE SCALE GENOMIC DNA]</scope>
    <source>
        <strain>SL483</strain>
    </source>
</reference>